<sequence>MGMMQEFKEFAVKGNVVDLAVAVIVGAAFGKIVDSLVQDVIMPVVGKIFGGLDFSNYYIALNNQDPNLTLVEAKKLGAVLAYGNFITIALNFIILAFIIFQMVRLLNKLKRTEPPAPEEPAAVPEDIALLREIRDSLKK</sequence>
<evidence type="ECO:0000255" key="1">
    <source>
        <dbReference type="HAMAP-Rule" id="MF_00115"/>
    </source>
</evidence>
<comment type="function">
    <text evidence="1">Channel that opens in response to stretch forces in the membrane lipid bilayer. May participate in the regulation of osmotic pressure changes within the cell.</text>
</comment>
<comment type="subunit">
    <text evidence="1">Homopentamer.</text>
</comment>
<comment type="subcellular location">
    <subcellularLocation>
        <location evidence="1">Cell inner membrane</location>
        <topology evidence="1">Multi-pass membrane protein</topology>
    </subcellularLocation>
</comment>
<comment type="similarity">
    <text evidence="1">Belongs to the MscL family.</text>
</comment>
<keyword id="KW-0997">Cell inner membrane</keyword>
<keyword id="KW-1003">Cell membrane</keyword>
<keyword id="KW-0407">Ion channel</keyword>
<keyword id="KW-0406">Ion transport</keyword>
<keyword id="KW-0472">Membrane</keyword>
<keyword id="KW-0812">Transmembrane</keyword>
<keyword id="KW-1133">Transmembrane helix</keyword>
<keyword id="KW-0813">Transport</keyword>
<name>MSCL_JANMA</name>
<organism>
    <name type="scientific">Janthinobacterium sp. (strain Marseille)</name>
    <name type="common">Minibacterium massiliensis</name>
    <dbReference type="NCBI Taxonomy" id="375286"/>
    <lineage>
        <taxon>Bacteria</taxon>
        <taxon>Pseudomonadati</taxon>
        <taxon>Pseudomonadota</taxon>
        <taxon>Betaproteobacteria</taxon>
        <taxon>Burkholderiales</taxon>
        <taxon>Oxalobacteraceae</taxon>
        <taxon>Janthinobacterium</taxon>
    </lineage>
</organism>
<accession>A6T365</accession>
<reference key="1">
    <citation type="journal article" date="2007" name="PLoS Genet.">
        <title>Genome analysis of Minibacterium massiliensis highlights the convergent evolution of water-living bacteria.</title>
        <authorList>
            <person name="Audic S."/>
            <person name="Robert C."/>
            <person name="Campagna B."/>
            <person name="Parinello H."/>
            <person name="Claverie J.-M."/>
            <person name="Raoult D."/>
            <person name="Drancourt M."/>
        </authorList>
    </citation>
    <scope>NUCLEOTIDE SEQUENCE [LARGE SCALE GENOMIC DNA]</scope>
    <source>
        <strain>Marseille</strain>
    </source>
</reference>
<protein>
    <recommendedName>
        <fullName evidence="1">Large-conductance mechanosensitive channel</fullName>
    </recommendedName>
</protein>
<feature type="chain" id="PRO_1000015386" description="Large-conductance mechanosensitive channel">
    <location>
        <begin position="1"/>
        <end position="139"/>
    </location>
</feature>
<feature type="transmembrane region" description="Helical" evidence="1">
    <location>
        <begin position="10"/>
        <end position="30"/>
    </location>
</feature>
<feature type="transmembrane region" description="Helical" evidence="1">
    <location>
        <begin position="40"/>
        <end position="60"/>
    </location>
</feature>
<feature type="transmembrane region" description="Helical" evidence="1">
    <location>
        <begin position="80"/>
        <end position="100"/>
    </location>
</feature>
<gene>
    <name evidence="1" type="primary">mscL</name>
    <name type="ordered locus">mma_3272</name>
</gene>
<dbReference type="EMBL" id="CP000269">
    <property type="protein sequence ID" value="ABR88660.1"/>
    <property type="molecule type" value="Genomic_DNA"/>
</dbReference>
<dbReference type="RefSeq" id="WP_012081115.1">
    <property type="nucleotide sequence ID" value="NC_009659.1"/>
</dbReference>
<dbReference type="SMR" id="A6T365"/>
<dbReference type="STRING" id="375286.mma_3272"/>
<dbReference type="KEGG" id="mms:mma_3272"/>
<dbReference type="eggNOG" id="COG1970">
    <property type="taxonomic scope" value="Bacteria"/>
</dbReference>
<dbReference type="HOGENOM" id="CLU_095787_0_1_4"/>
<dbReference type="OrthoDB" id="9810350at2"/>
<dbReference type="Proteomes" id="UP000006388">
    <property type="component" value="Chromosome"/>
</dbReference>
<dbReference type="GO" id="GO:0005886">
    <property type="term" value="C:plasma membrane"/>
    <property type="evidence" value="ECO:0007669"/>
    <property type="project" value="UniProtKB-SubCell"/>
</dbReference>
<dbReference type="GO" id="GO:0008381">
    <property type="term" value="F:mechanosensitive monoatomic ion channel activity"/>
    <property type="evidence" value="ECO:0007669"/>
    <property type="project" value="UniProtKB-UniRule"/>
</dbReference>
<dbReference type="Gene3D" id="1.10.1200.120">
    <property type="entry name" value="Large-conductance mechanosensitive channel, MscL, domain 1"/>
    <property type="match status" value="1"/>
</dbReference>
<dbReference type="HAMAP" id="MF_00115">
    <property type="entry name" value="MscL"/>
    <property type="match status" value="1"/>
</dbReference>
<dbReference type="InterPro" id="IPR019823">
    <property type="entry name" value="Mechanosensitive_channel_CS"/>
</dbReference>
<dbReference type="InterPro" id="IPR001185">
    <property type="entry name" value="MS_channel"/>
</dbReference>
<dbReference type="InterPro" id="IPR037673">
    <property type="entry name" value="MSC/AndL"/>
</dbReference>
<dbReference type="InterPro" id="IPR036019">
    <property type="entry name" value="MscL_channel"/>
</dbReference>
<dbReference type="NCBIfam" id="TIGR00220">
    <property type="entry name" value="mscL"/>
    <property type="match status" value="1"/>
</dbReference>
<dbReference type="NCBIfam" id="NF001843">
    <property type="entry name" value="PRK00567.1-4"/>
    <property type="match status" value="1"/>
</dbReference>
<dbReference type="NCBIfam" id="NF010557">
    <property type="entry name" value="PRK13952.1"/>
    <property type="match status" value="1"/>
</dbReference>
<dbReference type="PANTHER" id="PTHR30266:SF2">
    <property type="entry name" value="LARGE-CONDUCTANCE MECHANOSENSITIVE CHANNEL"/>
    <property type="match status" value="1"/>
</dbReference>
<dbReference type="PANTHER" id="PTHR30266">
    <property type="entry name" value="MECHANOSENSITIVE CHANNEL MSCL"/>
    <property type="match status" value="1"/>
</dbReference>
<dbReference type="Pfam" id="PF01741">
    <property type="entry name" value="MscL"/>
    <property type="match status" value="1"/>
</dbReference>
<dbReference type="PRINTS" id="PR01264">
    <property type="entry name" value="MECHCHANNEL"/>
</dbReference>
<dbReference type="SUPFAM" id="SSF81330">
    <property type="entry name" value="Gated mechanosensitive channel"/>
    <property type="match status" value="1"/>
</dbReference>
<dbReference type="PROSITE" id="PS01327">
    <property type="entry name" value="MSCL"/>
    <property type="match status" value="1"/>
</dbReference>
<proteinExistence type="inferred from homology"/>